<gene>
    <name type="primary">nifB</name>
</gene>
<comment type="function">
    <text evidence="1">Involved in the biosynthesis of the iron-molybdenum cofactor (FeMo-co or M-cluster) found in the dinitrogenase enzyme of the nitrogenase complex in nitrogen-fixing microorganisms. NifB catalyzes the crucial step of radical SAM-dependent carbide insertion that occurs concomitant with the insertion of a 9th sulfur and the rearrangement/coupling of two [4Fe-4S] clusters into a [8Fe-9S-C] cluster, the precursor to the M-cluster.</text>
</comment>
<comment type="cofactor">
    <cofactor evidence="1">
        <name>[4Fe-4S] cluster</name>
        <dbReference type="ChEBI" id="CHEBI:49883"/>
    </cofactor>
    <text evidence="1">Binds 3 [4Fe-4S] clusters per monomer. One cluster is coordinated with 3 cysteines and an exchangeable S-adenosyl-L-methionine. The two others probably act as substrate.</text>
</comment>
<comment type="pathway">
    <text evidence="1">Cofactor biosynthesis; Fe-Mo cofactor biosynthesis.</text>
</comment>
<comment type="similarity">
    <text evidence="4">Belongs to the radical SAM superfamily. NifB family.</text>
</comment>
<keyword id="KW-0004">4Fe-4S</keyword>
<keyword id="KW-0408">Iron</keyword>
<keyword id="KW-0411">Iron-sulfur</keyword>
<keyword id="KW-0456">Lyase</keyword>
<keyword id="KW-0479">Metal-binding</keyword>
<keyword id="KW-0535">Nitrogen fixation</keyword>
<keyword id="KW-0949">S-adenosyl-L-methionine</keyword>
<sequence>MDPATWAKVKDHPCYSEEAHHHFARMHVSVAPACNIQCNYCNRKYDCSNESRPGVVSERLTPEEAARKVIAVANEVPQLSVLGIAGPGDSAYDWLKTKETFRLVTAQIPDIKLCLSSNGLALPDHLDELVEMNVDHVTITINMIDPEVGAKIYPWIFYNRKRIYGVEASRILHERQMAALDGLVARGILVKVNSVLIPGINDAHLLEVNREVKRRGAFLHNIMPLISAPEHGTHFGLTGQRGPTAAELLAVQEACAGGANLMKHCRQCRADAVGLLGEDRGQEFTLDLVPEAPVYDPAARETYRDWVGAEREDRRAAAEAAQAATEAACAASSPKLLVAVTTQGGGRINQHFGHATEFQVFEVDATGVRFAFHRRCDNYCVDGGGAEDRLDRVIAALDGIDTVLVAKIGDCPREGLASAGITARDSWAHDYIEPAILALYRERMTQKQAITA</sequence>
<reference key="1">
    <citation type="journal article" date="1988" name="Mol. Gen. Genet.">
        <title>Genetic characterization and sequence analysis of the duplicated nifA/nifB gene region of Rhodobacter capsulatus.</title>
        <authorList>
            <person name="Masepohl P."/>
            <person name="Klipp W."/>
            <person name="Puehler A."/>
        </authorList>
    </citation>
    <scope>NUCLEOTIDE SEQUENCE [GENOMIC DNA]</scope>
</reference>
<reference key="2">
    <citation type="journal article" date="1993" name="J. Bacteriol.">
        <title>Characterization of Rhodobacter capsulatus genes encoding a molybdenum transport system and putative molybdenum-pterin-binding proteins.</title>
        <authorList>
            <person name="Wang G."/>
            <person name="Angermueller S."/>
            <person name="Klipp W."/>
        </authorList>
    </citation>
    <scope>NUCLEOTIDE SEQUENCE [GENOMIC DNA] OF 381-452</scope>
</reference>
<name>NIFB_RHOCA</name>
<evidence type="ECO:0000250" key="1">
    <source>
        <dbReference type="UniProtKB" id="D5VRM1"/>
    </source>
</evidence>
<evidence type="ECO:0000250" key="2">
    <source>
        <dbReference type="UniProtKB" id="P69848"/>
    </source>
</evidence>
<evidence type="ECO:0000255" key="3">
    <source>
        <dbReference type="PROSITE-ProRule" id="PRU01266"/>
    </source>
</evidence>
<evidence type="ECO:0000305" key="4"/>
<protein>
    <recommendedName>
        <fullName>FeMo cofactor biosynthesis protein NifB</fullName>
        <ecNumber>4.-.-.-</ecNumber>
    </recommendedName>
    <alternativeName>
        <fullName>Nitrogenase cofactor maturase NifB</fullName>
    </alternativeName>
    <alternativeName>
        <fullName>Radical SAM assemblase NifB</fullName>
    </alternativeName>
</protein>
<accession>P17434</accession>
<proteinExistence type="inferred from homology"/>
<feature type="chain" id="PRO_0000153047" description="FeMo cofactor biosynthesis protein NifB">
    <location>
        <begin position="1"/>
        <end position="452"/>
    </location>
</feature>
<feature type="domain" description="Radical SAM core" evidence="3">
    <location>
        <begin position="20"/>
        <end position="271"/>
    </location>
</feature>
<feature type="binding site" evidence="2">
    <location>
        <position position="34"/>
    </location>
    <ligand>
        <name>[4Fe-4S] cluster</name>
        <dbReference type="ChEBI" id="CHEBI:49883"/>
        <label>1</label>
        <note>4Fe-4S-S-AdoMet</note>
    </ligand>
</feature>
<feature type="binding site" evidence="2">
    <location>
        <position position="38"/>
    </location>
    <ligand>
        <name>[4Fe-4S] cluster</name>
        <dbReference type="ChEBI" id="CHEBI:49883"/>
        <label>1</label>
        <note>4Fe-4S-S-AdoMet</note>
    </ligand>
</feature>
<feature type="binding site" evidence="2">
    <location>
        <position position="40"/>
    </location>
    <ligand>
        <name>S-adenosyl-L-methionine</name>
        <dbReference type="ChEBI" id="CHEBI:59789"/>
    </ligand>
</feature>
<feature type="binding site" evidence="2">
    <location>
        <position position="41"/>
    </location>
    <ligand>
        <name>[4Fe-4S] cluster</name>
        <dbReference type="ChEBI" id="CHEBI:49883"/>
        <label>1</label>
        <note>4Fe-4S-S-AdoMet</note>
    </ligand>
</feature>
<feature type="binding site" evidence="2">
    <location>
        <position position="88"/>
    </location>
    <ligand>
        <name>S-adenosyl-L-methionine</name>
        <dbReference type="ChEBI" id="CHEBI:59789"/>
    </ligand>
</feature>
<feature type="binding site" evidence="2">
    <location>
        <position position="140"/>
    </location>
    <ligand>
        <name>S-adenosyl-L-methionine</name>
        <dbReference type="ChEBI" id="CHEBI:59789"/>
    </ligand>
</feature>
<feature type="binding site" evidence="1">
    <location>
        <position position="265"/>
    </location>
    <ligand>
        <name>[4Fe-4S] cluster</name>
        <dbReference type="ChEBI" id="CHEBI:49883"/>
        <label>2</label>
    </ligand>
</feature>
<feature type="binding site" evidence="1">
    <location>
        <position position="268"/>
    </location>
    <ligand>
        <name>[4Fe-4S] cluster</name>
        <dbReference type="ChEBI" id="CHEBI:49883"/>
        <label>2</label>
    </ligand>
</feature>
<dbReference type="EC" id="4.-.-.-"/>
<dbReference type="EMBL" id="X07567">
    <property type="protein sequence ID" value="CAA30450.1"/>
    <property type="molecule type" value="Genomic_DNA"/>
</dbReference>
<dbReference type="EMBL" id="L06254">
    <property type="status" value="NOT_ANNOTATED_CDS"/>
    <property type="molecule type" value="Unassigned_DNA"/>
</dbReference>
<dbReference type="PIR" id="S03829">
    <property type="entry name" value="S03829"/>
</dbReference>
<dbReference type="SMR" id="P17434"/>
<dbReference type="UniPathway" id="UPA00782"/>
<dbReference type="GO" id="GO:0051539">
    <property type="term" value="F:4 iron, 4 sulfur cluster binding"/>
    <property type="evidence" value="ECO:0007669"/>
    <property type="project" value="UniProtKB-KW"/>
</dbReference>
<dbReference type="GO" id="GO:0016829">
    <property type="term" value="F:lyase activity"/>
    <property type="evidence" value="ECO:0007669"/>
    <property type="project" value="UniProtKB-KW"/>
</dbReference>
<dbReference type="GO" id="GO:0046872">
    <property type="term" value="F:metal ion binding"/>
    <property type="evidence" value="ECO:0007669"/>
    <property type="project" value="UniProtKB-KW"/>
</dbReference>
<dbReference type="GO" id="GO:0009399">
    <property type="term" value="P:nitrogen fixation"/>
    <property type="evidence" value="ECO:0007669"/>
    <property type="project" value="UniProtKB-KW"/>
</dbReference>
<dbReference type="CDD" id="cd00852">
    <property type="entry name" value="NifB"/>
    <property type="match status" value="1"/>
</dbReference>
<dbReference type="CDD" id="cd01335">
    <property type="entry name" value="Radical_SAM"/>
    <property type="match status" value="1"/>
</dbReference>
<dbReference type="Gene3D" id="3.20.20.70">
    <property type="entry name" value="Aldolase class I"/>
    <property type="match status" value="1"/>
</dbReference>
<dbReference type="Gene3D" id="3.30.420.130">
    <property type="entry name" value="Dinitrogenase iron-molybdenum cofactor biosynthesis domain"/>
    <property type="match status" value="1"/>
</dbReference>
<dbReference type="InterPro" id="IPR013785">
    <property type="entry name" value="Aldolase_TIM"/>
</dbReference>
<dbReference type="InterPro" id="IPR003731">
    <property type="entry name" value="Di-Nase_FeMo-co_biosynth"/>
</dbReference>
<dbReference type="InterPro" id="IPR036105">
    <property type="entry name" value="DiNase_FeMo-co_biosyn_sf"/>
</dbReference>
<dbReference type="InterPro" id="IPR000385">
    <property type="entry name" value="MoaA_NifB_PqqE_Fe-S-bd_CS"/>
</dbReference>
<dbReference type="InterPro" id="IPR005980">
    <property type="entry name" value="Nase_CF_NifB"/>
</dbReference>
<dbReference type="InterPro" id="IPR034165">
    <property type="entry name" value="NifB_C"/>
</dbReference>
<dbReference type="InterPro" id="IPR007197">
    <property type="entry name" value="rSAM"/>
</dbReference>
<dbReference type="NCBIfam" id="TIGR01290">
    <property type="entry name" value="nifB"/>
    <property type="match status" value="1"/>
</dbReference>
<dbReference type="PANTHER" id="PTHR43787:SF13">
    <property type="entry name" value="FEMO COFACTOR BIOSYNTHESIS PROTEIN NIFB"/>
    <property type="match status" value="1"/>
</dbReference>
<dbReference type="PANTHER" id="PTHR43787">
    <property type="entry name" value="FEMO COFACTOR BIOSYNTHESIS PROTEIN NIFB-RELATED"/>
    <property type="match status" value="1"/>
</dbReference>
<dbReference type="Pfam" id="PF02579">
    <property type="entry name" value="Nitro_FeMo-Co"/>
    <property type="match status" value="1"/>
</dbReference>
<dbReference type="Pfam" id="PF04055">
    <property type="entry name" value="Radical_SAM"/>
    <property type="match status" value="1"/>
</dbReference>
<dbReference type="SFLD" id="SFLDF00281">
    <property type="entry name" value="FeMo_cofactor_biosynthesis_pro"/>
    <property type="match status" value="1"/>
</dbReference>
<dbReference type="SFLD" id="SFLDG01068">
    <property type="entry name" value="FeMo_cofactor_biosynthesis_pro"/>
    <property type="match status" value="1"/>
</dbReference>
<dbReference type="SFLD" id="SFLDG01067">
    <property type="entry name" value="SPASM/twitch_domain_containing"/>
    <property type="match status" value="1"/>
</dbReference>
<dbReference type="SUPFAM" id="SSF53146">
    <property type="entry name" value="Nitrogenase accessory factor-like"/>
    <property type="match status" value="1"/>
</dbReference>
<dbReference type="SUPFAM" id="SSF102114">
    <property type="entry name" value="Radical SAM enzymes"/>
    <property type="match status" value="1"/>
</dbReference>
<dbReference type="PROSITE" id="PS01305">
    <property type="entry name" value="MOAA_NIFB_PQQE"/>
    <property type="match status" value="1"/>
</dbReference>
<dbReference type="PROSITE" id="PS51918">
    <property type="entry name" value="RADICAL_SAM"/>
    <property type="match status" value="1"/>
</dbReference>
<organism>
    <name type="scientific">Rhodobacter capsulatus</name>
    <name type="common">Rhodopseudomonas capsulata</name>
    <dbReference type="NCBI Taxonomy" id="1061"/>
    <lineage>
        <taxon>Bacteria</taxon>
        <taxon>Pseudomonadati</taxon>
        <taxon>Pseudomonadota</taxon>
        <taxon>Alphaproteobacteria</taxon>
        <taxon>Rhodobacterales</taxon>
        <taxon>Rhodobacter group</taxon>
        <taxon>Rhodobacter</taxon>
    </lineage>
</organism>